<reference key="1">
    <citation type="journal article" date="2000" name="DNA Res.">
        <title>Structural analysis of Arabidopsis thaliana chromosome 3. II. Sequence features of the 4,251,695 bp regions covered by 90 P1, TAC and BAC clones.</title>
        <authorList>
            <person name="Kaneko T."/>
            <person name="Katoh T."/>
            <person name="Sato S."/>
            <person name="Nakamura Y."/>
            <person name="Asamizu E."/>
            <person name="Tabata S."/>
        </authorList>
    </citation>
    <scope>NUCLEOTIDE SEQUENCE [LARGE SCALE GENOMIC DNA]</scope>
    <source>
        <strain>cv. Columbia</strain>
    </source>
</reference>
<reference key="2">
    <citation type="journal article" date="2017" name="Plant J.">
        <title>Araport11: a complete reannotation of the Arabidopsis thaliana reference genome.</title>
        <authorList>
            <person name="Cheng C.Y."/>
            <person name="Krishnakumar V."/>
            <person name="Chan A.P."/>
            <person name="Thibaud-Nissen F."/>
            <person name="Schobel S."/>
            <person name="Town C.D."/>
        </authorList>
    </citation>
    <scope>GENOME REANNOTATION</scope>
    <source>
        <strain>cv. Columbia</strain>
    </source>
</reference>
<reference key="3">
    <citation type="journal article" date="2003" name="Science">
        <title>Empirical analysis of transcriptional activity in the Arabidopsis genome.</title>
        <authorList>
            <person name="Yamada K."/>
            <person name="Lim J."/>
            <person name="Dale J.M."/>
            <person name="Chen H."/>
            <person name="Shinn P."/>
            <person name="Palm C.J."/>
            <person name="Southwick A.M."/>
            <person name="Wu H.C."/>
            <person name="Kim C.J."/>
            <person name="Nguyen M."/>
            <person name="Pham P.K."/>
            <person name="Cheuk R.F."/>
            <person name="Karlin-Newmann G."/>
            <person name="Liu S.X."/>
            <person name="Lam B."/>
            <person name="Sakano H."/>
            <person name="Wu T."/>
            <person name="Yu G."/>
            <person name="Miranda M."/>
            <person name="Quach H.L."/>
            <person name="Tripp M."/>
            <person name="Chang C.H."/>
            <person name="Lee J.M."/>
            <person name="Toriumi M.J."/>
            <person name="Chan M.M."/>
            <person name="Tang C.C."/>
            <person name="Onodera C.S."/>
            <person name="Deng J.M."/>
            <person name="Akiyama K."/>
            <person name="Ansari Y."/>
            <person name="Arakawa T."/>
            <person name="Banh J."/>
            <person name="Banno F."/>
            <person name="Bowser L."/>
            <person name="Brooks S.Y."/>
            <person name="Carninci P."/>
            <person name="Chao Q."/>
            <person name="Choy N."/>
            <person name="Enju A."/>
            <person name="Goldsmith A.D."/>
            <person name="Gurjal M."/>
            <person name="Hansen N.F."/>
            <person name="Hayashizaki Y."/>
            <person name="Johnson-Hopson C."/>
            <person name="Hsuan V.W."/>
            <person name="Iida K."/>
            <person name="Karnes M."/>
            <person name="Khan S."/>
            <person name="Koesema E."/>
            <person name="Ishida J."/>
            <person name="Jiang P.X."/>
            <person name="Jones T."/>
            <person name="Kawai J."/>
            <person name="Kamiya A."/>
            <person name="Meyers C."/>
            <person name="Nakajima M."/>
            <person name="Narusaka M."/>
            <person name="Seki M."/>
            <person name="Sakurai T."/>
            <person name="Satou M."/>
            <person name="Tamse R."/>
            <person name="Vaysberg M."/>
            <person name="Wallender E.K."/>
            <person name="Wong C."/>
            <person name="Yamamura Y."/>
            <person name="Yuan S."/>
            <person name="Shinozaki K."/>
            <person name="Davis R.W."/>
            <person name="Theologis A."/>
            <person name="Ecker J.R."/>
        </authorList>
    </citation>
    <scope>NUCLEOTIDE SEQUENCE [LARGE SCALE MRNA]</scope>
    <source>
        <strain>cv. Columbia</strain>
    </source>
</reference>
<reference key="4">
    <citation type="submission" date="2002-03" db="EMBL/GenBank/DDBJ databases">
        <title>Full-length cDNA from Arabidopsis thaliana.</title>
        <authorList>
            <person name="Brover V.V."/>
            <person name="Troukhan M.E."/>
            <person name="Alexandrov N.A."/>
            <person name="Lu Y.-P."/>
            <person name="Flavell R.B."/>
            <person name="Feldmann K.A."/>
        </authorList>
    </citation>
    <scope>NUCLEOTIDE SEQUENCE [LARGE SCALE MRNA]</scope>
</reference>
<reference key="5">
    <citation type="submission" date="2006-07" db="EMBL/GenBank/DDBJ databases">
        <title>Large-scale analysis of RIKEN Arabidopsis full-length (RAFL) cDNAs.</title>
        <authorList>
            <person name="Totoki Y."/>
            <person name="Seki M."/>
            <person name="Ishida J."/>
            <person name="Nakajima M."/>
            <person name="Enju A."/>
            <person name="Kamiya A."/>
            <person name="Narusaka M."/>
            <person name="Shin-i T."/>
            <person name="Nakagawa M."/>
            <person name="Sakamoto N."/>
            <person name="Oishi K."/>
            <person name="Kohara Y."/>
            <person name="Kobayashi M."/>
            <person name="Toyoda A."/>
            <person name="Sakaki Y."/>
            <person name="Sakurai T."/>
            <person name="Iida K."/>
            <person name="Akiyama K."/>
            <person name="Satou M."/>
            <person name="Toyoda T."/>
            <person name="Konagaya A."/>
            <person name="Carninci P."/>
            <person name="Kawai J."/>
            <person name="Hayashizaki Y."/>
            <person name="Shinozaki K."/>
        </authorList>
    </citation>
    <scope>NUCLEOTIDE SEQUENCE [LARGE SCALE MRNA]</scope>
    <source>
        <strain>cv. Columbia</strain>
    </source>
</reference>
<reference key="6">
    <citation type="journal article" date="2004" name="Plant Cell Physiol.">
        <title>Three Arabidopsis MBF1 homologs with distinct expression profiles play roles as transcriptional co-activators.</title>
        <authorList>
            <person name="Tsuda K."/>
            <person name="Tsuji T."/>
            <person name="Hirose S."/>
            <person name="Yamazaki K."/>
        </authorList>
    </citation>
    <scope>FUNCTION</scope>
    <scope>TISSUE SPECIFICITY</scope>
    <scope>INDUCTION BY ABSCISIC ACID</scope>
</reference>
<reference key="7">
    <citation type="journal article" date="2004" name="Biochim. Biophys. Acta">
        <title>Structure and expression analysis of three subtypes of Arabidopsis MBF1 genes.</title>
        <authorList>
            <person name="Tsuda K."/>
            <person name="Yamazaki K."/>
        </authorList>
    </citation>
    <scope>TISSUE SPECIFICITY</scope>
    <scope>DEVELOPMENTAL STAGE</scope>
    <scope>INDUCTION</scope>
</reference>
<reference key="8">
    <citation type="journal article" date="2005" name="J. Plant Res.">
        <title>Transcriptional coactivator MBF1s from Arabidopsis predominantly localize in nucleolus.</title>
        <authorList>
            <person name="Sugikawa Y."/>
            <person name="Ebihara S."/>
            <person name="Tsuda K."/>
            <person name="Niwa Y."/>
            <person name="Yamazaki K."/>
        </authorList>
    </citation>
    <scope>SUBCELLULAR LOCATION</scope>
</reference>
<reference key="9">
    <citation type="journal article" date="2005" name="Plant Physiol.">
        <title>Enhanced tolerance to environmental stress in transgenic plants expressing the transcriptional coactivator multiprotein bridging factor 1c.</title>
        <authorList>
            <person name="Suzuki N."/>
            <person name="Rizhsky L."/>
            <person name="Liang H."/>
            <person name="Shuman J."/>
            <person name="Shulaev V."/>
            <person name="Mittler R."/>
        </authorList>
    </citation>
    <scope>FUNCTION</scope>
    <scope>INDUCTION BY HEAT STRESS</scope>
    <scope>INDUCTION BY DEHYDRATION</scope>
</reference>
<reference key="10">
    <citation type="journal article" date="2008" name="J. Biol. Chem.">
        <title>The transcriptional co-activator MBF1c is a key regulator of thermotolerance in Arabidopsis thaliana.</title>
        <authorList>
            <person name="Suzuki N."/>
            <person name="Bajad S."/>
            <person name="Shuman J."/>
            <person name="Shulaev V."/>
            <person name="Mittler R."/>
        </authorList>
    </citation>
    <scope>FUNCTION</scope>
    <scope>SUBCELLULAR LOCATION</scope>
    <scope>INDUCTION BY HEAT STRESS</scope>
    <scope>INTERACTION WITH TPS5</scope>
    <scope>DISRUPTION PHENOTYPE</scope>
</reference>
<sequence>MPSRYPGAVTQDWEPVVLHKSKQKSQDLRDPKAVNAALRNGVAVQTVKKFDAGSNKKGKSTAVPVINTKKLEEETEPAAMDRVKAEVRLMIQKARLEKKMSQADLAKQINERTQVVQEYENGKAVPNQAVLAKMEKVLGVKLRGKIGK</sequence>
<feature type="chain" id="PRO_0000325905" description="Multiprotein-bridging factor 1c">
    <location>
        <begin position="1"/>
        <end position="148"/>
    </location>
</feature>
<feature type="domain" description="HTH cro/C1-type" evidence="1">
    <location>
        <begin position="91"/>
        <end position="145"/>
    </location>
</feature>
<feature type="DNA-binding region" description="H-T-H motif" evidence="1">
    <location>
        <begin position="102"/>
        <end position="121"/>
    </location>
</feature>
<feature type="sequence conflict" description="In Ref. 4; AAM62814." evidence="6" ref="4">
    <original>G</original>
    <variation>E</variation>
    <location>
        <position position="7"/>
    </location>
</feature>
<keyword id="KW-0010">Activator</keyword>
<keyword id="KW-0025">Alternative splicing</keyword>
<keyword id="KW-0963">Cytoplasm</keyword>
<keyword id="KW-0238">DNA-binding</keyword>
<keyword id="KW-0539">Nucleus</keyword>
<keyword id="KW-1185">Reference proteome</keyword>
<keyword id="KW-0804">Transcription</keyword>
<keyword id="KW-0805">Transcription regulation</keyword>
<organism>
    <name type="scientific">Arabidopsis thaliana</name>
    <name type="common">Mouse-ear cress</name>
    <dbReference type="NCBI Taxonomy" id="3702"/>
    <lineage>
        <taxon>Eukaryota</taxon>
        <taxon>Viridiplantae</taxon>
        <taxon>Streptophyta</taxon>
        <taxon>Embryophyta</taxon>
        <taxon>Tracheophyta</taxon>
        <taxon>Spermatophyta</taxon>
        <taxon>Magnoliopsida</taxon>
        <taxon>eudicotyledons</taxon>
        <taxon>Gunneridae</taxon>
        <taxon>Pentapetalae</taxon>
        <taxon>rosids</taxon>
        <taxon>malvids</taxon>
        <taxon>Brassicales</taxon>
        <taxon>Brassicaceae</taxon>
        <taxon>Camelineae</taxon>
        <taxon>Arabidopsis</taxon>
    </lineage>
</organism>
<dbReference type="EMBL" id="AB020746">
    <property type="protein sequence ID" value="BAB01997.1"/>
    <property type="molecule type" value="Genomic_DNA"/>
</dbReference>
<dbReference type="EMBL" id="CP002686">
    <property type="protein sequence ID" value="AEE76905.1"/>
    <property type="molecule type" value="Genomic_DNA"/>
</dbReference>
<dbReference type="EMBL" id="BT004761">
    <property type="protein sequence ID" value="AAO44027.1"/>
    <property type="molecule type" value="mRNA"/>
</dbReference>
<dbReference type="EMBL" id="AY085593">
    <property type="protein sequence ID" value="AAM62814.1"/>
    <property type="molecule type" value="mRNA"/>
</dbReference>
<dbReference type="EMBL" id="AK227957">
    <property type="protein sequence ID" value="BAE99925.1"/>
    <property type="molecule type" value="mRNA"/>
</dbReference>
<dbReference type="RefSeq" id="NP_189093.1">
    <molecule id="Q9LV58-1"/>
    <property type="nucleotide sequence ID" value="NM_113358.3"/>
</dbReference>
<dbReference type="SMR" id="Q9LV58"/>
<dbReference type="BioGRID" id="7372">
    <property type="interactions" value="7"/>
</dbReference>
<dbReference type="FunCoup" id="Q9LV58">
    <property type="interactions" value="2808"/>
</dbReference>
<dbReference type="IntAct" id="Q9LV58">
    <property type="interactions" value="6"/>
</dbReference>
<dbReference type="STRING" id="3702.Q9LV58"/>
<dbReference type="PaxDb" id="3702-AT3G24500.1"/>
<dbReference type="ProteomicsDB" id="238692">
    <molecule id="Q9LV58-1"/>
</dbReference>
<dbReference type="EnsemblPlants" id="AT3G24500.1">
    <molecule id="Q9LV58-1"/>
    <property type="protein sequence ID" value="AT3G24500.1"/>
    <property type="gene ID" value="AT3G24500"/>
</dbReference>
<dbReference type="GeneID" id="822041"/>
<dbReference type="Gramene" id="AT3G24500.1">
    <molecule id="Q9LV58-1"/>
    <property type="protein sequence ID" value="AT3G24500.1"/>
    <property type="gene ID" value="AT3G24500"/>
</dbReference>
<dbReference type="KEGG" id="ath:AT3G24500"/>
<dbReference type="Araport" id="AT3G24500"/>
<dbReference type="TAIR" id="AT3G24500">
    <property type="gene designation" value="MBF1C"/>
</dbReference>
<dbReference type="eggNOG" id="KOG3398">
    <property type="taxonomic scope" value="Eukaryota"/>
</dbReference>
<dbReference type="HOGENOM" id="CLU_112609_1_0_1"/>
<dbReference type="InParanoid" id="Q9LV58"/>
<dbReference type="OMA" id="KAVPNQM"/>
<dbReference type="OrthoDB" id="10253401at2759"/>
<dbReference type="PhylomeDB" id="Q9LV58"/>
<dbReference type="PRO" id="PR:Q9LV58"/>
<dbReference type="Proteomes" id="UP000006548">
    <property type="component" value="Chromosome 3"/>
</dbReference>
<dbReference type="ExpressionAtlas" id="Q9LV58">
    <property type="expression patterns" value="baseline and differential"/>
</dbReference>
<dbReference type="GO" id="GO:0005737">
    <property type="term" value="C:cytoplasm"/>
    <property type="evidence" value="ECO:0007669"/>
    <property type="project" value="UniProtKB-SubCell"/>
</dbReference>
<dbReference type="GO" id="GO:0005730">
    <property type="term" value="C:nucleolus"/>
    <property type="evidence" value="ECO:0000314"/>
    <property type="project" value="TAIR"/>
</dbReference>
<dbReference type="GO" id="GO:0003677">
    <property type="term" value="F:DNA binding"/>
    <property type="evidence" value="ECO:0007669"/>
    <property type="project" value="UniProtKB-KW"/>
</dbReference>
<dbReference type="GO" id="GO:0003700">
    <property type="term" value="F:DNA-binding transcription factor activity"/>
    <property type="evidence" value="ECO:0000304"/>
    <property type="project" value="TAIR"/>
</dbReference>
<dbReference type="GO" id="GO:0003713">
    <property type="term" value="F:transcription coactivator activity"/>
    <property type="evidence" value="ECO:0000316"/>
    <property type="project" value="TAIR"/>
</dbReference>
<dbReference type="GO" id="GO:0071456">
    <property type="term" value="P:cellular response to hypoxia"/>
    <property type="evidence" value="ECO:0007007"/>
    <property type="project" value="TAIR"/>
</dbReference>
<dbReference type="GO" id="GO:0009873">
    <property type="term" value="P:ethylene-activated signaling pathway"/>
    <property type="evidence" value="ECO:0000304"/>
    <property type="project" value="TAIR"/>
</dbReference>
<dbReference type="GO" id="GO:0045893">
    <property type="term" value="P:positive regulation of DNA-templated transcription"/>
    <property type="evidence" value="ECO:0000304"/>
    <property type="project" value="TAIR"/>
</dbReference>
<dbReference type="GO" id="GO:0009737">
    <property type="term" value="P:response to abscisic acid"/>
    <property type="evidence" value="ECO:0000270"/>
    <property type="project" value="TAIR"/>
</dbReference>
<dbReference type="GO" id="GO:0009408">
    <property type="term" value="P:response to heat"/>
    <property type="evidence" value="ECO:0000270"/>
    <property type="project" value="TAIR"/>
</dbReference>
<dbReference type="GO" id="GO:0009414">
    <property type="term" value="P:response to water deprivation"/>
    <property type="evidence" value="ECO:0000270"/>
    <property type="project" value="TAIR"/>
</dbReference>
<dbReference type="CDD" id="cd00093">
    <property type="entry name" value="HTH_XRE"/>
    <property type="match status" value="1"/>
</dbReference>
<dbReference type="FunFam" id="1.10.260.40:FF:000018">
    <property type="entry name" value="Multiprotein bridging factor 1"/>
    <property type="match status" value="1"/>
</dbReference>
<dbReference type="Gene3D" id="1.10.260.40">
    <property type="entry name" value="lambda repressor-like DNA-binding domains"/>
    <property type="match status" value="1"/>
</dbReference>
<dbReference type="InterPro" id="IPR001387">
    <property type="entry name" value="Cro/C1-type_HTH"/>
</dbReference>
<dbReference type="InterPro" id="IPR010982">
    <property type="entry name" value="Lambda_DNA-bd_dom_sf"/>
</dbReference>
<dbReference type="InterPro" id="IPR013729">
    <property type="entry name" value="MBF1_N"/>
</dbReference>
<dbReference type="PANTHER" id="PTHR10245:SF15">
    <property type="entry name" value="ENDOTHELIAL DIFFERENTIATION-RELATED FACTOR 1"/>
    <property type="match status" value="1"/>
</dbReference>
<dbReference type="PANTHER" id="PTHR10245">
    <property type="entry name" value="ENDOTHELIAL DIFFERENTIATION-RELATED FACTOR 1 MULTIPROTEIN BRIDGING FACTOR 1"/>
    <property type="match status" value="1"/>
</dbReference>
<dbReference type="Pfam" id="PF01381">
    <property type="entry name" value="HTH_3"/>
    <property type="match status" value="1"/>
</dbReference>
<dbReference type="Pfam" id="PF08523">
    <property type="entry name" value="MBF1"/>
    <property type="match status" value="1"/>
</dbReference>
<dbReference type="SMART" id="SM00530">
    <property type="entry name" value="HTH_XRE"/>
    <property type="match status" value="1"/>
</dbReference>
<dbReference type="SUPFAM" id="SSF47413">
    <property type="entry name" value="lambda repressor-like DNA-binding domains"/>
    <property type="match status" value="1"/>
</dbReference>
<dbReference type="PROSITE" id="PS50943">
    <property type="entry name" value="HTH_CROC1"/>
    <property type="match status" value="1"/>
</dbReference>
<protein>
    <recommendedName>
        <fullName>Multiprotein-bridging factor 1c</fullName>
    </recommendedName>
</protein>
<accession>Q9LV58</accession>
<accession>Q8LE67</accession>
<proteinExistence type="evidence at protein level"/>
<evidence type="ECO:0000255" key="1">
    <source>
        <dbReference type="PROSITE-ProRule" id="PRU00257"/>
    </source>
</evidence>
<evidence type="ECO:0000269" key="2">
    <source>
    </source>
</evidence>
<evidence type="ECO:0000269" key="3">
    <source>
    </source>
</evidence>
<evidence type="ECO:0000269" key="4">
    <source>
    </source>
</evidence>
<evidence type="ECO:0000269" key="5">
    <source>
    </source>
</evidence>
<evidence type="ECO:0000305" key="6"/>
<comment type="function">
    <text evidence="2 4 5">Transcriptional coactivator that stimulates transcriptional activity by bridging regulatory proteins and TBP, thereby recruiting TBP to promoters occupied by DNA-binding regulators. Involved in the tolerance to heat and osmotic stress by partially activating the ethylene-response signal transduction pathway.</text>
</comment>
<comment type="subunit">
    <text>Binds to TPS5.</text>
</comment>
<comment type="subcellular location">
    <subcellularLocation>
        <location>Nucleus</location>
        <location>Nucleolus</location>
    </subcellularLocation>
    <subcellularLocation>
        <location>Cytoplasm</location>
    </subcellularLocation>
    <text>PubMed:16283071 shows a localization restricted to the nucleus and not altered by heat or ABA treatment, while PubMed:18201973 describes a transport from the cytoplasm to the nucleus induced by heat stress.</text>
</comment>
<comment type="alternative products">
    <event type="alternative splicing"/>
    <isoform>
        <id>Q9LV58-1</id>
        <name>1</name>
        <sequence type="displayed"/>
    </isoform>
    <text>A number of isoforms are produced. According to EST sequences.</text>
</comment>
<comment type="tissue specificity">
    <text evidence="2 3">Expressed in leaves, roots, stems, flowers, siliques and shoots. Not detected in seeds.</text>
</comment>
<comment type="developmental stage">
    <text evidence="3">Scarcely expressed in early stages, restricted to the shoot apical meristem in 14-day-old seedlings and detected in all tissues in 28-day-old seedlings.</text>
</comment>
<comment type="induction">
    <text evidence="2 3 4 5">By abscisic acid, H(2)O(2), heat treatment, dehydration and high salt, but not by cold treatment, 2,4-D, ACC, methyl jasmonate or salicylic acid.</text>
</comment>
<comment type="disruption phenotype">
    <text evidence="5">Plants are deficient in basal thermotolerance.</text>
</comment>
<comment type="similarity">
    <text evidence="6">Belongs to the MBF1 family.</text>
</comment>
<gene>
    <name type="primary">MBF1C</name>
    <name type="ordered locus">At3g24500</name>
    <name type="ORF">MOB24.13</name>
</gene>
<name>MBF1C_ARATH</name>